<dbReference type="EC" id="2.7.1.71" evidence="1"/>
<dbReference type="EMBL" id="BA000012">
    <property type="protein sequence ID" value="BAB50436.1"/>
    <property type="molecule type" value="Genomic_DNA"/>
</dbReference>
<dbReference type="RefSeq" id="WP_010911782.1">
    <property type="nucleotide sequence ID" value="NC_002678.2"/>
</dbReference>
<dbReference type="SMR" id="Q98FY0"/>
<dbReference type="KEGG" id="mlo:mll3573"/>
<dbReference type="PATRIC" id="fig|266835.9.peg.2847"/>
<dbReference type="eggNOG" id="COG0703">
    <property type="taxonomic scope" value="Bacteria"/>
</dbReference>
<dbReference type="HOGENOM" id="CLU_057607_2_0_5"/>
<dbReference type="UniPathway" id="UPA00053">
    <property type="reaction ID" value="UER00088"/>
</dbReference>
<dbReference type="Proteomes" id="UP000000552">
    <property type="component" value="Chromosome"/>
</dbReference>
<dbReference type="GO" id="GO:0005829">
    <property type="term" value="C:cytosol"/>
    <property type="evidence" value="ECO:0007669"/>
    <property type="project" value="TreeGrafter"/>
</dbReference>
<dbReference type="GO" id="GO:0005524">
    <property type="term" value="F:ATP binding"/>
    <property type="evidence" value="ECO:0007669"/>
    <property type="project" value="UniProtKB-UniRule"/>
</dbReference>
<dbReference type="GO" id="GO:0000287">
    <property type="term" value="F:magnesium ion binding"/>
    <property type="evidence" value="ECO:0007669"/>
    <property type="project" value="UniProtKB-UniRule"/>
</dbReference>
<dbReference type="GO" id="GO:0004765">
    <property type="term" value="F:shikimate kinase activity"/>
    <property type="evidence" value="ECO:0007669"/>
    <property type="project" value="UniProtKB-UniRule"/>
</dbReference>
<dbReference type="GO" id="GO:0008652">
    <property type="term" value="P:amino acid biosynthetic process"/>
    <property type="evidence" value="ECO:0007669"/>
    <property type="project" value="UniProtKB-KW"/>
</dbReference>
<dbReference type="GO" id="GO:0009073">
    <property type="term" value="P:aromatic amino acid family biosynthetic process"/>
    <property type="evidence" value="ECO:0007669"/>
    <property type="project" value="UniProtKB-KW"/>
</dbReference>
<dbReference type="GO" id="GO:0009423">
    <property type="term" value="P:chorismate biosynthetic process"/>
    <property type="evidence" value="ECO:0007669"/>
    <property type="project" value="UniProtKB-UniRule"/>
</dbReference>
<dbReference type="CDD" id="cd00464">
    <property type="entry name" value="SK"/>
    <property type="match status" value="1"/>
</dbReference>
<dbReference type="Gene3D" id="3.40.50.300">
    <property type="entry name" value="P-loop containing nucleotide triphosphate hydrolases"/>
    <property type="match status" value="1"/>
</dbReference>
<dbReference type="HAMAP" id="MF_00109">
    <property type="entry name" value="Shikimate_kinase"/>
    <property type="match status" value="1"/>
</dbReference>
<dbReference type="InterPro" id="IPR027417">
    <property type="entry name" value="P-loop_NTPase"/>
</dbReference>
<dbReference type="InterPro" id="IPR031322">
    <property type="entry name" value="Shikimate/glucono_kinase"/>
</dbReference>
<dbReference type="InterPro" id="IPR000623">
    <property type="entry name" value="Shikimate_kinase/TSH1"/>
</dbReference>
<dbReference type="InterPro" id="IPR023000">
    <property type="entry name" value="Shikimate_kinase_CS"/>
</dbReference>
<dbReference type="NCBIfam" id="NF010552">
    <property type="entry name" value="PRK13946.1"/>
    <property type="match status" value="1"/>
</dbReference>
<dbReference type="PANTHER" id="PTHR21087">
    <property type="entry name" value="SHIKIMATE KINASE"/>
    <property type="match status" value="1"/>
</dbReference>
<dbReference type="PANTHER" id="PTHR21087:SF16">
    <property type="entry name" value="SHIKIMATE KINASE 1, CHLOROPLASTIC"/>
    <property type="match status" value="1"/>
</dbReference>
<dbReference type="Pfam" id="PF01202">
    <property type="entry name" value="SKI"/>
    <property type="match status" value="1"/>
</dbReference>
<dbReference type="PRINTS" id="PR01100">
    <property type="entry name" value="SHIKIMTKNASE"/>
</dbReference>
<dbReference type="SUPFAM" id="SSF52540">
    <property type="entry name" value="P-loop containing nucleoside triphosphate hydrolases"/>
    <property type="match status" value="1"/>
</dbReference>
<dbReference type="PROSITE" id="PS01128">
    <property type="entry name" value="SHIKIMATE_KINASE"/>
    <property type="match status" value="1"/>
</dbReference>
<accession>Q98FY0</accession>
<reference key="1">
    <citation type="journal article" date="2000" name="DNA Res.">
        <title>Complete genome structure of the nitrogen-fixing symbiotic bacterium Mesorhizobium loti.</title>
        <authorList>
            <person name="Kaneko T."/>
            <person name="Nakamura Y."/>
            <person name="Sato S."/>
            <person name="Asamizu E."/>
            <person name="Kato T."/>
            <person name="Sasamoto S."/>
            <person name="Watanabe A."/>
            <person name="Idesawa K."/>
            <person name="Ishikawa A."/>
            <person name="Kawashima K."/>
            <person name="Kimura T."/>
            <person name="Kishida Y."/>
            <person name="Kiyokawa C."/>
            <person name="Kohara M."/>
            <person name="Matsumoto M."/>
            <person name="Matsuno A."/>
            <person name="Mochizuki Y."/>
            <person name="Nakayama S."/>
            <person name="Nakazaki N."/>
            <person name="Shimpo S."/>
            <person name="Sugimoto M."/>
            <person name="Takeuchi C."/>
            <person name="Yamada M."/>
            <person name="Tabata S."/>
        </authorList>
    </citation>
    <scope>NUCLEOTIDE SEQUENCE [LARGE SCALE GENOMIC DNA]</scope>
    <source>
        <strain>LMG 29417 / CECT 9101 / MAFF 303099</strain>
    </source>
</reference>
<evidence type="ECO:0000255" key="1">
    <source>
        <dbReference type="HAMAP-Rule" id="MF_00109"/>
    </source>
</evidence>
<sequence>MNAHQANPPGESLAALLGRLGSRSIVFVGLMGAGKTAIGRKVATMLSLPFIDSDQEIESVSRMTVPELFERYGEAEFRALEQRVILRVLENGPQVLSTGGGAFMNAQTREAIAGHGVSVWLKAELDLLMDRVSKKQNRPLLKSADPRAVLERLMSERYPVYATSDVTVPTRDDRKEVIAAEVLNALCRHFGIDEIAATGEIES</sequence>
<gene>
    <name evidence="1" type="primary">aroK</name>
    <name type="ordered locus">mll3573</name>
</gene>
<proteinExistence type="inferred from homology"/>
<keyword id="KW-0028">Amino-acid biosynthesis</keyword>
<keyword id="KW-0057">Aromatic amino acid biosynthesis</keyword>
<keyword id="KW-0067">ATP-binding</keyword>
<keyword id="KW-0963">Cytoplasm</keyword>
<keyword id="KW-0418">Kinase</keyword>
<keyword id="KW-0460">Magnesium</keyword>
<keyword id="KW-0479">Metal-binding</keyword>
<keyword id="KW-0547">Nucleotide-binding</keyword>
<keyword id="KW-0808">Transferase</keyword>
<comment type="function">
    <text evidence="1">Catalyzes the specific phosphorylation of the 3-hydroxyl group of shikimic acid using ATP as a cosubstrate.</text>
</comment>
<comment type="catalytic activity">
    <reaction evidence="1">
        <text>shikimate + ATP = 3-phosphoshikimate + ADP + H(+)</text>
        <dbReference type="Rhea" id="RHEA:13121"/>
        <dbReference type="ChEBI" id="CHEBI:15378"/>
        <dbReference type="ChEBI" id="CHEBI:30616"/>
        <dbReference type="ChEBI" id="CHEBI:36208"/>
        <dbReference type="ChEBI" id="CHEBI:145989"/>
        <dbReference type="ChEBI" id="CHEBI:456216"/>
        <dbReference type="EC" id="2.7.1.71"/>
    </reaction>
</comment>
<comment type="cofactor">
    <cofactor evidence="1">
        <name>Mg(2+)</name>
        <dbReference type="ChEBI" id="CHEBI:18420"/>
    </cofactor>
    <text evidence="1">Binds 1 Mg(2+) ion per subunit.</text>
</comment>
<comment type="pathway">
    <text evidence="1">Metabolic intermediate biosynthesis; chorismate biosynthesis; chorismate from D-erythrose 4-phosphate and phosphoenolpyruvate: step 5/7.</text>
</comment>
<comment type="subunit">
    <text evidence="1">Monomer.</text>
</comment>
<comment type="subcellular location">
    <subcellularLocation>
        <location evidence="1">Cytoplasm</location>
    </subcellularLocation>
</comment>
<comment type="similarity">
    <text evidence="1">Belongs to the shikimate kinase family.</text>
</comment>
<protein>
    <recommendedName>
        <fullName evidence="1">Shikimate kinase</fullName>
        <shortName evidence="1">SK</shortName>
        <ecNumber evidence="1">2.7.1.71</ecNumber>
    </recommendedName>
</protein>
<organism>
    <name type="scientific">Mesorhizobium japonicum (strain LMG 29417 / CECT 9101 / MAFF 303099)</name>
    <name type="common">Mesorhizobium loti (strain MAFF 303099)</name>
    <dbReference type="NCBI Taxonomy" id="266835"/>
    <lineage>
        <taxon>Bacteria</taxon>
        <taxon>Pseudomonadati</taxon>
        <taxon>Pseudomonadota</taxon>
        <taxon>Alphaproteobacteria</taxon>
        <taxon>Hyphomicrobiales</taxon>
        <taxon>Phyllobacteriaceae</taxon>
        <taxon>Mesorhizobium</taxon>
    </lineage>
</organism>
<name>AROK_RHILO</name>
<feature type="chain" id="PRO_0000237919" description="Shikimate kinase">
    <location>
        <begin position="1"/>
        <end position="203"/>
    </location>
</feature>
<feature type="binding site" evidence="1">
    <location>
        <begin position="32"/>
        <end position="37"/>
    </location>
    <ligand>
        <name>ATP</name>
        <dbReference type="ChEBI" id="CHEBI:30616"/>
    </ligand>
</feature>
<feature type="binding site" evidence="1">
    <location>
        <position position="36"/>
    </location>
    <ligand>
        <name>Mg(2+)</name>
        <dbReference type="ChEBI" id="CHEBI:18420"/>
    </ligand>
</feature>
<feature type="binding site" evidence="1">
    <location>
        <position position="54"/>
    </location>
    <ligand>
        <name>substrate</name>
    </ligand>
</feature>
<feature type="binding site" evidence="1">
    <location>
        <position position="78"/>
    </location>
    <ligand>
        <name>substrate</name>
    </ligand>
</feature>
<feature type="binding site" evidence="1">
    <location>
        <position position="100"/>
    </location>
    <ligand>
        <name>substrate</name>
    </ligand>
</feature>
<feature type="binding site" evidence="1">
    <location>
        <position position="138"/>
    </location>
    <ligand>
        <name>ATP</name>
        <dbReference type="ChEBI" id="CHEBI:30616"/>
    </ligand>
</feature>
<feature type="binding site" evidence="1">
    <location>
        <position position="157"/>
    </location>
    <ligand>
        <name>substrate</name>
    </ligand>
</feature>